<organism>
    <name type="scientific">Aquifex aeolicus (strain VF5)</name>
    <dbReference type="NCBI Taxonomy" id="224324"/>
    <lineage>
        <taxon>Bacteria</taxon>
        <taxon>Pseudomonadati</taxon>
        <taxon>Aquificota</taxon>
        <taxon>Aquificia</taxon>
        <taxon>Aquificales</taxon>
        <taxon>Aquificaceae</taxon>
        <taxon>Aquifex</taxon>
    </lineage>
</organism>
<name>GCSH4_AQUAE</name>
<evidence type="ECO:0000255" key="1">
    <source>
        <dbReference type="HAMAP-Rule" id="MF_00272"/>
    </source>
</evidence>
<evidence type="ECO:0000255" key="2">
    <source>
        <dbReference type="PROSITE-ProRule" id="PRU01066"/>
    </source>
</evidence>
<evidence type="ECO:0000256" key="3">
    <source>
        <dbReference type="SAM" id="MobiDB-lite"/>
    </source>
</evidence>
<dbReference type="EMBL" id="AE000657">
    <property type="protein sequence ID" value="AAC07150.1"/>
    <property type="molecule type" value="Genomic_DNA"/>
</dbReference>
<dbReference type="PIR" id="E70395">
    <property type="entry name" value="E70395"/>
</dbReference>
<dbReference type="RefSeq" id="NP_213756.1">
    <property type="nucleotide sequence ID" value="NC_000918.1"/>
</dbReference>
<dbReference type="RefSeq" id="WP_010880694.1">
    <property type="nucleotide sequence ID" value="NC_000918.1"/>
</dbReference>
<dbReference type="SMR" id="O67192"/>
<dbReference type="FunCoup" id="O67192">
    <property type="interactions" value="438"/>
</dbReference>
<dbReference type="STRING" id="224324.aq_1108"/>
<dbReference type="EnsemblBacteria" id="AAC07150">
    <property type="protein sequence ID" value="AAC07150"/>
    <property type="gene ID" value="aq_1108"/>
</dbReference>
<dbReference type="KEGG" id="aae:aq_1108"/>
<dbReference type="PATRIC" id="fig|224324.8.peg.865"/>
<dbReference type="eggNOG" id="COG0509">
    <property type="taxonomic scope" value="Bacteria"/>
</dbReference>
<dbReference type="HOGENOM" id="CLU_097408_2_2_0"/>
<dbReference type="InParanoid" id="O67192"/>
<dbReference type="OrthoDB" id="9796712at2"/>
<dbReference type="Proteomes" id="UP000000798">
    <property type="component" value="Chromosome"/>
</dbReference>
<dbReference type="GO" id="GO:0005829">
    <property type="term" value="C:cytosol"/>
    <property type="evidence" value="ECO:0000318"/>
    <property type="project" value="GO_Central"/>
</dbReference>
<dbReference type="GO" id="GO:0005960">
    <property type="term" value="C:glycine cleavage complex"/>
    <property type="evidence" value="ECO:0007669"/>
    <property type="project" value="InterPro"/>
</dbReference>
<dbReference type="GO" id="GO:0019464">
    <property type="term" value="P:glycine decarboxylation via glycine cleavage system"/>
    <property type="evidence" value="ECO:0007669"/>
    <property type="project" value="UniProtKB-UniRule"/>
</dbReference>
<dbReference type="CDD" id="cd06848">
    <property type="entry name" value="GCS_H"/>
    <property type="match status" value="1"/>
</dbReference>
<dbReference type="Gene3D" id="2.40.50.100">
    <property type="match status" value="1"/>
</dbReference>
<dbReference type="HAMAP" id="MF_00272">
    <property type="entry name" value="GcvH"/>
    <property type="match status" value="1"/>
</dbReference>
<dbReference type="InterPro" id="IPR000089">
    <property type="entry name" value="Biotin_lipoyl"/>
</dbReference>
<dbReference type="InterPro" id="IPR002930">
    <property type="entry name" value="GCV_H"/>
</dbReference>
<dbReference type="InterPro" id="IPR033753">
    <property type="entry name" value="GCV_H/Fam206"/>
</dbReference>
<dbReference type="InterPro" id="IPR017453">
    <property type="entry name" value="GCV_H_sub"/>
</dbReference>
<dbReference type="InterPro" id="IPR011053">
    <property type="entry name" value="Single_hybrid_motif"/>
</dbReference>
<dbReference type="NCBIfam" id="TIGR00527">
    <property type="entry name" value="gcvH"/>
    <property type="match status" value="1"/>
</dbReference>
<dbReference type="NCBIfam" id="NF002270">
    <property type="entry name" value="PRK01202.1"/>
    <property type="match status" value="1"/>
</dbReference>
<dbReference type="PANTHER" id="PTHR11715">
    <property type="entry name" value="GLYCINE CLEAVAGE SYSTEM H PROTEIN"/>
    <property type="match status" value="1"/>
</dbReference>
<dbReference type="PANTHER" id="PTHR11715:SF3">
    <property type="entry name" value="GLYCINE CLEAVAGE SYSTEM H PROTEIN-RELATED"/>
    <property type="match status" value="1"/>
</dbReference>
<dbReference type="Pfam" id="PF01597">
    <property type="entry name" value="GCV_H"/>
    <property type="match status" value="1"/>
</dbReference>
<dbReference type="SUPFAM" id="SSF51230">
    <property type="entry name" value="Single hybrid motif"/>
    <property type="match status" value="1"/>
</dbReference>
<dbReference type="PROSITE" id="PS50968">
    <property type="entry name" value="BIOTINYL_LIPOYL"/>
    <property type="match status" value="1"/>
</dbReference>
<sequence>MEDFYVEDYLVKGDRYYTKEHEWVRVKNGFAEVGITDYAQKQLGDIVYVDLPEKGKEVDAGDTLANIESVKNVAPVYAPVTGTVVEVNEDLKDEPGIINDDPYEAGWIAVIEMKDPTEVEDLMTAQDYAEYLKEIVEEEKEEEVEVKEEELIETESIEELSEEELGYEENK</sequence>
<gene>
    <name evidence="1" type="primary">gcvH4</name>
    <name type="ordered locus">aq_1108</name>
</gene>
<reference key="1">
    <citation type="journal article" date="1998" name="Nature">
        <title>The complete genome of the hyperthermophilic bacterium Aquifex aeolicus.</title>
        <authorList>
            <person name="Deckert G."/>
            <person name="Warren P.V."/>
            <person name="Gaasterland T."/>
            <person name="Young W.G."/>
            <person name="Lenox A.L."/>
            <person name="Graham D.E."/>
            <person name="Overbeek R."/>
            <person name="Snead M.A."/>
            <person name="Keller M."/>
            <person name="Aujay M."/>
            <person name="Huber R."/>
            <person name="Feldman R.A."/>
            <person name="Short J.M."/>
            <person name="Olsen G.J."/>
            <person name="Swanson R.V."/>
        </authorList>
    </citation>
    <scope>NUCLEOTIDE SEQUENCE [LARGE SCALE GENOMIC DNA]</scope>
    <source>
        <strain>VF5</strain>
    </source>
</reference>
<protein>
    <recommendedName>
        <fullName evidence="1">Glycine cleavage system H protein 4</fullName>
    </recommendedName>
</protein>
<feature type="chain" id="PRO_0000166200" description="Glycine cleavage system H protein 4">
    <location>
        <begin position="1"/>
        <end position="171"/>
    </location>
</feature>
<feature type="domain" description="Lipoyl-binding" evidence="2">
    <location>
        <begin position="30"/>
        <end position="112"/>
    </location>
</feature>
<feature type="region of interest" description="Disordered" evidence="3">
    <location>
        <begin position="139"/>
        <end position="171"/>
    </location>
</feature>
<feature type="modified residue" description="N6-lipoyllysine" evidence="1">
    <location>
        <position position="71"/>
    </location>
</feature>
<comment type="function">
    <text evidence="1">The glycine cleavage system catalyzes the degradation of glycine. The H protein shuttles the methylamine group of glycine from the P protein to the T protein.</text>
</comment>
<comment type="cofactor">
    <cofactor evidence="1">
        <name>(R)-lipoate</name>
        <dbReference type="ChEBI" id="CHEBI:83088"/>
    </cofactor>
    <text evidence="1">Binds 1 lipoyl cofactor covalently.</text>
</comment>
<comment type="subunit">
    <text evidence="1">The glycine cleavage system is composed of four proteins: P, T, L and H.</text>
</comment>
<comment type="similarity">
    <text evidence="1">Belongs to the GcvH family.</text>
</comment>
<accession>O67192</accession>
<keyword id="KW-0450">Lipoyl</keyword>
<keyword id="KW-1185">Reference proteome</keyword>
<proteinExistence type="inferred from homology"/>